<accession>B9DVC2</accession>
<comment type="function">
    <text evidence="2">Catalyzes the formation of N(7)-methylguanine at position 46 (m7G46) in tRNA.</text>
</comment>
<comment type="catalytic activity">
    <reaction evidence="2">
        <text>guanosine(46) in tRNA + S-adenosyl-L-methionine = N(7)-methylguanosine(46) in tRNA + S-adenosyl-L-homocysteine</text>
        <dbReference type="Rhea" id="RHEA:42708"/>
        <dbReference type="Rhea" id="RHEA-COMP:10188"/>
        <dbReference type="Rhea" id="RHEA-COMP:10189"/>
        <dbReference type="ChEBI" id="CHEBI:57856"/>
        <dbReference type="ChEBI" id="CHEBI:59789"/>
        <dbReference type="ChEBI" id="CHEBI:74269"/>
        <dbReference type="ChEBI" id="CHEBI:74480"/>
        <dbReference type="EC" id="2.1.1.33"/>
    </reaction>
</comment>
<comment type="pathway">
    <text evidence="2">tRNA modification; N(7)-methylguanine-tRNA biosynthesis.</text>
</comment>
<comment type="similarity">
    <text evidence="2">Belongs to the class I-like SAM-binding methyltransferase superfamily. TrmB family.</text>
</comment>
<sequence length="211" mass="24518">MRVRKRKGAEEHLENHPEYVIMNPEDIKGHWKEVFGNDHPIHIEVGSGKGGFITGKALQNPEINYIGIDIQLSVLSYALDKVLESNAPNVKLLRVDGSSLTNYFENGEIDLLYLNFSDPWPKTKHEKRRLTYKDFLETYKQILPEHGEIHFKTDNRGLFEYSLASFSQFGMTLKQVWLDLHASDFEGNVMTEYEEKFSKKGQVIYRVEAFF</sequence>
<name>TRMB_STRU0</name>
<organism>
    <name type="scientific">Streptococcus uberis (strain ATCC BAA-854 / 0140J)</name>
    <dbReference type="NCBI Taxonomy" id="218495"/>
    <lineage>
        <taxon>Bacteria</taxon>
        <taxon>Bacillati</taxon>
        <taxon>Bacillota</taxon>
        <taxon>Bacilli</taxon>
        <taxon>Lactobacillales</taxon>
        <taxon>Streptococcaceae</taxon>
        <taxon>Streptococcus</taxon>
    </lineage>
</organism>
<gene>
    <name evidence="2" type="primary">trmB</name>
    <name type="ordered locus">SUB1471</name>
</gene>
<reference key="1">
    <citation type="journal article" date="2009" name="BMC Genomics">
        <title>Evidence for niche adaptation in the genome of the bovine pathogen Streptococcus uberis.</title>
        <authorList>
            <person name="Ward P.N."/>
            <person name="Holden M.T.G."/>
            <person name="Leigh J.A."/>
            <person name="Lennard N."/>
            <person name="Bignell A."/>
            <person name="Barron A."/>
            <person name="Clark L."/>
            <person name="Quail M.A."/>
            <person name="Woodward J."/>
            <person name="Barrell B.G."/>
            <person name="Egan S.A."/>
            <person name="Field T.R."/>
            <person name="Maskell D."/>
            <person name="Kehoe M."/>
            <person name="Dowson C.G."/>
            <person name="Chanter N."/>
            <person name="Whatmore A.M."/>
            <person name="Bentley S.D."/>
            <person name="Parkhill J."/>
        </authorList>
    </citation>
    <scope>NUCLEOTIDE SEQUENCE [LARGE SCALE GENOMIC DNA]</scope>
    <source>
        <strain>ATCC BAA-854 / 0140J</strain>
    </source>
</reference>
<dbReference type="EC" id="2.1.1.33" evidence="2"/>
<dbReference type="EMBL" id="AM946015">
    <property type="protein sequence ID" value="CAR43163.1"/>
    <property type="molecule type" value="Genomic_DNA"/>
</dbReference>
<dbReference type="RefSeq" id="WP_015911783.1">
    <property type="nucleotide sequence ID" value="NC_012004.1"/>
</dbReference>
<dbReference type="SMR" id="B9DVC2"/>
<dbReference type="STRING" id="218495.SUB1471"/>
<dbReference type="GeneID" id="93826791"/>
<dbReference type="KEGG" id="sub:SUB1471"/>
<dbReference type="eggNOG" id="COG0220">
    <property type="taxonomic scope" value="Bacteria"/>
</dbReference>
<dbReference type="HOGENOM" id="CLU_050910_2_1_9"/>
<dbReference type="OrthoDB" id="9802090at2"/>
<dbReference type="UniPathway" id="UPA00989"/>
<dbReference type="Proteomes" id="UP000000449">
    <property type="component" value="Chromosome"/>
</dbReference>
<dbReference type="GO" id="GO:0043527">
    <property type="term" value="C:tRNA methyltransferase complex"/>
    <property type="evidence" value="ECO:0007669"/>
    <property type="project" value="TreeGrafter"/>
</dbReference>
<dbReference type="GO" id="GO:0008176">
    <property type="term" value="F:tRNA (guanine(46)-N7)-methyltransferase activity"/>
    <property type="evidence" value="ECO:0007669"/>
    <property type="project" value="UniProtKB-UniRule"/>
</dbReference>
<dbReference type="CDD" id="cd02440">
    <property type="entry name" value="AdoMet_MTases"/>
    <property type="match status" value="1"/>
</dbReference>
<dbReference type="FunFam" id="3.40.50.150:FF:000035">
    <property type="entry name" value="tRNA (guanine-N(7)-)-methyltransferase"/>
    <property type="match status" value="1"/>
</dbReference>
<dbReference type="Gene3D" id="3.40.50.150">
    <property type="entry name" value="Vaccinia Virus protein VP39"/>
    <property type="match status" value="1"/>
</dbReference>
<dbReference type="HAMAP" id="MF_01057">
    <property type="entry name" value="tRNA_methyltr_TrmB"/>
    <property type="match status" value="1"/>
</dbReference>
<dbReference type="InterPro" id="IPR029063">
    <property type="entry name" value="SAM-dependent_MTases_sf"/>
</dbReference>
<dbReference type="InterPro" id="IPR003358">
    <property type="entry name" value="tRNA_(Gua-N-7)_MeTrfase_Trmb"/>
</dbReference>
<dbReference type="InterPro" id="IPR055361">
    <property type="entry name" value="tRNA_methyltr_TrmB_bact"/>
</dbReference>
<dbReference type="NCBIfam" id="NF001080">
    <property type="entry name" value="PRK00121.2-2"/>
    <property type="match status" value="1"/>
</dbReference>
<dbReference type="NCBIfam" id="TIGR00091">
    <property type="entry name" value="tRNA (guanosine(46)-N7)-methyltransferase TrmB"/>
    <property type="match status" value="1"/>
</dbReference>
<dbReference type="PANTHER" id="PTHR23417">
    <property type="entry name" value="3-DEOXY-D-MANNO-OCTULOSONIC-ACID TRANSFERASE/TRNA GUANINE-N 7 - -METHYLTRANSFERASE"/>
    <property type="match status" value="1"/>
</dbReference>
<dbReference type="PANTHER" id="PTHR23417:SF14">
    <property type="entry name" value="PENTACOTRIPEPTIDE-REPEAT REGION OF PRORP DOMAIN-CONTAINING PROTEIN"/>
    <property type="match status" value="1"/>
</dbReference>
<dbReference type="Pfam" id="PF02390">
    <property type="entry name" value="Methyltransf_4"/>
    <property type="match status" value="1"/>
</dbReference>
<dbReference type="SUPFAM" id="SSF53335">
    <property type="entry name" value="S-adenosyl-L-methionine-dependent methyltransferases"/>
    <property type="match status" value="1"/>
</dbReference>
<dbReference type="PROSITE" id="PS51625">
    <property type="entry name" value="SAM_MT_TRMB"/>
    <property type="match status" value="1"/>
</dbReference>
<proteinExistence type="inferred from homology"/>
<keyword id="KW-0489">Methyltransferase</keyword>
<keyword id="KW-1185">Reference proteome</keyword>
<keyword id="KW-0949">S-adenosyl-L-methionine</keyword>
<keyword id="KW-0808">Transferase</keyword>
<keyword id="KW-0819">tRNA processing</keyword>
<protein>
    <recommendedName>
        <fullName evidence="2">tRNA (guanine-N(7)-)-methyltransferase</fullName>
        <ecNumber evidence="2">2.1.1.33</ecNumber>
    </recommendedName>
    <alternativeName>
        <fullName evidence="2">tRNA (guanine(46)-N(7))-methyltransferase</fullName>
    </alternativeName>
    <alternativeName>
        <fullName evidence="2">tRNA(m7G46)-methyltransferase</fullName>
    </alternativeName>
</protein>
<feature type="chain" id="PRO_1000149667" description="tRNA (guanine-N(7)-)-methyltransferase">
    <location>
        <begin position="1"/>
        <end position="211"/>
    </location>
</feature>
<feature type="region of interest" description="Interaction with RNA" evidence="2">
    <location>
        <begin position="124"/>
        <end position="129"/>
    </location>
</feature>
<feature type="active site" evidence="1">
    <location>
        <position position="118"/>
    </location>
</feature>
<feature type="binding site" evidence="2">
    <location>
        <position position="44"/>
    </location>
    <ligand>
        <name>S-adenosyl-L-methionine</name>
        <dbReference type="ChEBI" id="CHEBI:59789"/>
    </ligand>
</feature>
<feature type="binding site" evidence="2">
    <location>
        <position position="69"/>
    </location>
    <ligand>
        <name>S-adenosyl-L-methionine</name>
        <dbReference type="ChEBI" id="CHEBI:59789"/>
    </ligand>
</feature>
<feature type="binding site" evidence="2">
    <location>
        <position position="96"/>
    </location>
    <ligand>
        <name>S-adenosyl-L-methionine</name>
        <dbReference type="ChEBI" id="CHEBI:59789"/>
    </ligand>
</feature>
<feature type="binding site" evidence="2">
    <location>
        <position position="118"/>
    </location>
    <ligand>
        <name>S-adenosyl-L-methionine</name>
        <dbReference type="ChEBI" id="CHEBI:59789"/>
    </ligand>
</feature>
<feature type="binding site" evidence="2">
    <location>
        <position position="122"/>
    </location>
    <ligand>
        <name>substrate</name>
    </ligand>
</feature>
<feature type="binding site" evidence="2">
    <location>
        <position position="154"/>
    </location>
    <ligand>
        <name>substrate</name>
    </ligand>
</feature>
<feature type="binding site" evidence="2">
    <location>
        <begin position="191"/>
        <end position="194"/>
    </location>
    <ligand>
        <name>substrate</name>
    </ligand>
</feature>
<evidence type="ECO:0000250" key="1"/>
<evidence type="ECO:0000255" key="2">
    <source>
        <dbReference type="HAMAP-Rule" id="MF_01057"/>
    </source>
</evidence>